<protein>
    <recommendedName>
        <fullName>Phenol-soluble modulin alpha 1 peptide</fullName>
    </recommendedName>
</protein>
<keyword id="KW-0204">Cytolysis</keyword>
<keyword id="KW-0843">Virulence</keyword>
<comment type="function">
    <text evidence="1">Peptide which can recruit, activate and subsequently lyse human neutrophils, thus eliminating the main cellular defense against infection. Stimulates the secretion of the chemotactic factor interleukin-8 (IL-8). The ensuing activation process triggers an inflammatory response in the host, thus contributing greatly to virulence. Also possesses hemolytic activity, which may contribute to the development of disease.</text>
</comment>
<comment type="induction">
    <text evidence="1">Up-regulated by agr.</text>
</comment>
<comment type="miscellaneous">
    <text>Peptide production is higher in most prevalent community-associated MRSA strains than in hospital-associated MRSA strains.</text>
</comment>
<comment type="similarity">
    <text evidence="2">Belongs to the phenol-soluble modulin alpha peptides family.</text>
</comment>
<accession>P0C7Y0</accession>
<sequence length="21" mass="2260">MGIIAGIIKVIKSLIEQFTGK</sequence>
<organism>
    <name type="scientific">Staphylococcus aureus (strain USA300)</name>
    <dbReference type="NCBI Taxonomy" id="367830"/>
    <lineage>
        <taxon>Bacteria</taxon>
        <taxon>Bacillati</taxon>
        <taxon>Bacillota</taxon>
        <taxon>Bacilli</taxon>
        <taxon>Bacillales</taxon>
        <taxon>Staphylococcaceae</taxon>
        <taxon>Staphylococcus</taxon>
    </lineage>
</organism>
<proteinExistence type="evidence at protein level"/>
<name>PSMA1_STAA3</name>
<reference key="1">
    <citation type="journal article" date="2006" name="Lancet">
        <title>Complete genome sequence of USA300, an epidemic clone of community-acquired meticillin-resistant Staphylococcus aureus.</title>
        <authorList>
            <person name="Diep B.A."/>
            <person name="Gill S.R."/>
            <person name="Chang R.F."/>
            <person name="Phan T.H."/>
            <person name="Chen J.H."/>
            <person name="Davidson M.G."/>
            <person name="Lin F."/>
            <person name="Lin J."/>
            <person name="Carleton H.A."/>
            <person name="Mongodin E.F."/>
            <person name="Sensabaugh G.F."/>
            <person name="Perdreau-Remington F."/>
        </authorList>
    </citation>
    <scope>NUCLEOTIDE SEQUENCE [LARGE SCALE GENOMIC DNA]</scope>
    <source>
        <strain>USA300</strain>
    </source>
</reference>
<reference key="2">
    <citation type="journal article" date="2007" name="Nat. Med.">
        <title>Identification of novel cytolytic peptides as key virulence determinants for community-associated MRSA.</title>
        <authorList>
            <person name="Wang R."/>
            <person name="Braughton K.R."/>
            <person name="Kretschmer D."/>
            <person name="Bach T.-H.L."/>
            <person name="Queck S.Y."/>
            <person name="Li M."/>
            <person name="Kennedy A.D."/>
            <person name="Dorward D.W."/>
            <person name="Klebanoff S.J."/>
            <person name="Peschel A."/>
            <person name="DeLeo F.R."/>
            <person name="Otto M."/>
        </authorList>
    </citation>
    <scope>FUNCTION AS A VIRULENCE FACTOR</scope>
    <scope>IDENTIFICATION BY MASS SPECTROMETRY</scope>
    <scope>INDUCTION BY AGR</scope>
</reference>
<gene>
    <name type="primary">psmA1</name>
    <name type="ordered locus">SAUSA300_0424.4</name>
</gene>
<feature type="peptide" id="PRO_0000345031" description="Phenol-soluble modulin alpha 1 peptide">
    <location>
        <begin position="1"/>
        <end position="21"/>
    </location>
</feature>
<evidence type="ECO:0000269" key="1">
    <source>
    </source>
</evidence>
<evidence type="ECO:0000305" key="2"/>
<dbReference type="EMBL" id="CP000255">
    <property type="status" value="NOT_ANNOTATED_CDS"/>
    <property type="molecule type" value="Genomic_DNA"/>
</dbReference>
<dbReference type="SMR" id="P0C7Y0"/>
<dbReference type="PHI-base" id="PHI:6666"/>
<dbReference type="Proteomes" id="UP000001939">
    <property type="component" value="Chromosome"/>
</dbReference>
<dbReference type="GO" id="GO:0031640">
    <property type="term" value="P:killing of cells of another organism"/>
    <property type="evidence" value="ECO:0007669"/>
    <property type="project" value="UniProtKB-KW"/>
</dbReference>
<dbReference type="InterPro" id="IPR031429">
    <property type="entry name" value="PSM_alpha"/>
</dbReference>
<dbReference type="NCBIfam" id="NF033425">
    <property type="entry name" value="PSM_alpha_1_2"/>
    <property type="match status" value="1"/>
</dbReference>
<dbReference type="Pfam" id="PF17063">
    <property type="entry name" value="PSMalpha"/>
    <property type="match status" value="1"/>
</dbReference>